<dbReference type="EC" id="2.7.7.6" evidence="1"/>
<dbReference type="EMBL" id="AE017244">
    <property type="protein sequence ID" value="AAZ53980.1"/>
    <property type="molecule type" value="Genomic_DNA"/>
</dbReference>
<dbReference type="RefSeq" id="WP_011290400.1">
    <property type="nucleotide sequence ID" value="NC_007332.1"/>
</dbReference>
<dbReference type="SMR" id="Q4A7A9"/>
<dbReference type="KEGG" id="mhp:MHP7448_0617"/>
<dbReference type="HOGENOM" id="CLU_000524_4_1_14"/>
<dbReference type="Proteomes" id="UP000000553">
    <property type="component" value="Chromosome"/>
</dbReference>
<dbReference type="GO" id="GO:0000428">
    <property type="term" value="C:DNA-directed RNA polymerase complex"/>
    <property type="evidence" value="ECO:0007669"/>
    <property type="project" value="UniProtKB-KW"/>
</dbReference>
<dbReference type="GO" id="GO:0003677">
    <property type="term" value="F:DNA binding"/>
    <property type="evidence" value="ECO:0007669"/>
    <property type="project" value="UniProtKB-UniRule"/>
</dbReference>
<dbReference type="GO" id="GO:0003899">
    <property type="term" value="F:DNA-directed RNA polymerase activity"/>
    <property type="evidence" value="ECO:0007669"/>
    <property type="project" value="UniProtKB-UniRule"/>
</dbReference>
<dbReference type="GO" id="GO:0032549">
    <property type="term" value="F:ribonucleoside binding"/>
    <property type="evidence" value="ECO:0007669"/>
    <property type="project" value="InterPro"/>
</dbReference>
<dbReference type="GO" id="GO:0006351">
    <property type="term" value="P:DNA-templated transcription"/>
    <property type="evidence" value="ECO:0007669"/>
    <property type="project" value="UniProtKB-UniRule"/>
</dbReference>
<dbReference type="CDD" id="cd12797">
    <property type="entry name" value="M23_peptidase"/>
    <property type="match status" value="1"/>
</dbReference>
<dbReference type="CDD" id="cd00653">
    <property type="entry name" value="RNA_pol_B_RPB2"/>
    <property type="match status" value="1"/>
</dbReference>
<dbReference type="Gene3D" id="2.40.50.100">
    <property type="match status" value="1"/>
</dbReference>
<dbReference type="Gene3D" id="3.90.1100.10">
    <property type="match status" value="2"/>
</dbReference>
<dbReference type="Gene3D" id="2.30.150.10">
    <property type="entry name" value="DNA-directed RNA polymerase, beta subunit, external 1 domain"/>
    <property type="match status" value="1"/>
</dbReference>
<dbReference type="Gene3D" id="2.40.270.10">
    <property type="entry name" value="DNA-directed RNA polymerase, subunit 2, domain 6"/>
    <property type="match status" value="3"/>
</dbReference>
<dbReference type="Gene3D" id="3.90.1800.10">
    <property type="entry name" value="RNA polymerase alpha subunit dimerisation domain"/>
    <property type="match status" value="1"/>
</dbReference>
<dbReference type="HAMAP" id="MF_01321">
    <property type="entry name" value="RNApol_bact_RpoB"/>
    <property type="match status" value="1"/>
</dbReference>
<dbReference type="InterPro" id="IPR042107">
    <property type="entry name" value="DNA-dir_RNA_pol_bsu_ext_1_sf"/>
</dbReference>
<dbReference type="InterPro" id="IPR019462">
    <property type="entry name" value="DNA-dir_RNA_pol_bsu_external_1"/>
</dbReference>
<dbReference type="InterPro" id="IPR015712">
    <property type="entry name" value="DNA-dir_RNA_pol_su2"/>
</dbReference>
<dbReference type="InterPro" id="IPR007120">
    <property type="entry name" value="DNA-dir_RNAP_su2_dom"/>
</dbReference>
<dbReference type="InterPro" id="IPR037033">
    <property type="entry name" value="DNA-dir_RNAP_su2_hyb_sf"/>
</dbReference>
<dbReference type="InterPro" id="IPR010243">
    <property type="entry name" value="RNA_pol_bsu_bac"/>
</dbReference>
<dbReference type="InterPro" id="IPR007121">
    <property type="entry name" value="RNA_pol_bsu_CS"/>
</dbReference>
<dbReference type="InterPro" id="IPR007644">
    <property type="entry name" value="RNA_pol_bsu_protrusion"/>
</dbReference>
<dbReference type="InterPro" id="IPR007642">
    <property type="entry name" value="RNA_pol_Rpb2_2"/>
</dbReference>
<dbReference type="InterPro" id="IPR007645">
    <property type="entry name" value="RNA_pol_Rpb2_3"/>
</dbReference>
<dbReference type="InterPro" id="IPR007641">
    <property type="entry name" value="RNA_pol_Rpb2_7"/>
</dbReference>
<dbReference type="NCBIfam" id="NF001616">
    <property type="entry name" value="PRK00405.1"/>
    <property type="match status" value="1"/>
</dbReference>
<dbReference type="PANTHER" id="PTHR20856">
    <property type="entry name" value="DNA-DIRECTED RNA POLYMERASE I SUBUNIT 2"/>
    <property type="match status" value="1"/>
</dbReference>
<dbReference type="Pfam" id="PF04563">
    <property type="entry name" value="RNA_pol_Rpb2_1"/>
    <property type="match status" value="1"/>
</dbReference>
<dbReference type="Pfam" id="PF04561">
    <property type="entry name" value="RNA_pol_Rpb2_2"/>
    <property type="match status" value="1"/>
</dbReference>
<dbReference type="Pfam" id="PF04565">
    <property type="entry name" value="RNA_pol_Rpb2_3"/>
    <property type="match status" value="1"/>
</dbReference>
<dbReference type="Pfam" id="PF10385">
    <property type="entry name" value="RNA_pol_Rpb2_45"/>
    <property type="match status" value="1"/>
</dbReference>
<dbReference type="Pfam" id="PF00562">
    <property type="entry name" value="RNA_pol_Rpb2_6"/>
    <property type="match status" value="1"/>
</dbReference>
<dbReference type="Pfam" id="PF04560">
    <property type="entry name" value="RNA_pol_Rpb2_7"/>
    <property type="match status" value="1"/>
</dbReference>
<dbReference type="SUPFAM" id="SSF64484">
    <property type="entry name" value="beta and beta-prime subunits of DNA dependent RNA-polymerase"/>
    <property type="match status" value="1"/>
</dbReference>
<dbReference type="PROSITE" id="PS01166">
    <property type="entry name" value="RNA_POL_BETA"/>
    <property type="match status" value="1"/>
</dbReference>
<keyword id="KW-0240">DNA-directed RNA polymerase</keyword>
<keyword id="KW-0548">Nucleotidyltransferase</keyword>
<keyword id="KW-0804">Transcription</keyword>
<keyword id="KW-0808">Transferase</keyword>
<comment type="function">
    <text evidence="1">DNA-dependent RNA polymerase catalyzes the transcription of DNA into RNA using the four ribonucleoside triphosphates as substrates.</text>
</comment>
<comment type="catalytic activity">
    <reaction evidence="1">
        <text>RNA(n) + a ribonucleoside 5'-triphosphate = RNA(n+1) + diphosphate</text>
        <dbReference type="Rhea" id="RHEA:21248"/>
        <dbReference type="Rhea" id="RHEA-COMP:14527"/>
        <dbReference type="Rhea" id="RHEA-COMP:17342"/>
        <dbReference type="ChEBI" id="CHEBI:33019"/>
        <dbReference type="ChEBI" id="CHEBI:61557"/>
        <dbReference type="ChEBI" id="CHEBI:140395"/>
        <dbReference type="EC" id="2.7.7.6"/>
    </reaction>
</comment>
<comment type="subunit">
    <text evidence="1">The RNAP catalytic core consists of 2 alpha, 1 beta, 1 beta' and 1 omega subunit. When a sigma factor is associated with the core the holoenzyme is formed, which can initiate transcription.</text>
</comment>
<comment type="similarity">
    <text evidence="1">Belongs to the RNA polymerase beta chain family.</text>
</comment>
<protein>
    <recommendedName>
        <fullName evidence="1">DNA-directed RNA polymerase subunit beta</fullName>
        <shortName evidence="1">RNAP subunit beta</shortName>
        <ecNumber evidence="1">2.7.7.6</ecNumber>
    </recommendedName>
    <alternativeName>
        <fullName evidence="1">RNA polymerase subunit beta</fullName>
    </alternativeName>
    <alternativeName>
        <fullName evidence="1">Transcriptase subunit beta</fullName>
    </alternativeName>
</protein>
<organism>
    <name type="scientific">Mesomycoplasma hyopneumoniae (strain 7448)</name>
    <name type="common">Mycoplasma hyopneumoniae</name>
    <dbReference type="NCBI Taxonomy" id="262722"/>
    <lineage>
        <taxon>Bacteria</taxon>
        <taxon>Bacillati</taxon>
        <taxon>Mycoplasmatota</taxon>
        <taxon>Mycoplasmoidales</taxon>
        <taxon>Metamycoplasmataceae</taxon>
        <taxon>Mesomycoplasma</taxon>
    </lineage>
</organism>
<name>RPOB_MESH7</name>
<sequence>MNHIYKLKSYGIGTDRRFYGVANKTLETPDFLDPVRESFDWFLHVGIPEAFDRIFPIVSANGKLEISFRRGSLRVEKPENEYLAIREAKIKGKTYSARVYVTLVKVHSEDGEMEEQEILLAEFPFMTQGGTFIINGFEKVVVSQLIRSPGVCFRENVRNQQADDLFNKVEIIPQLGSWMEIFHKVTGNQVDTVKFRIDKHKNIPLLSFLRAIGFTNETVRKYFGNSPELLESIRRHKLESLEENLELIYRIVRKDDRITEEGLKNLIPSIIFNERRYNLASTGRFMLNAKLNLVERISQTYLAEDLVSKKNKILFKKGTYITRQLALEIQEKFNNEEIPLSEIEGVDSTIYARQLEITRNENLWKRFYVAIVKVWPNKKSMLQESEPVNVIATDPNLNEKTLVLSDIIAIVSYYFNLLSNLGKSDDPDSLVNKRIVSVGELLQNQFLIALTKIEKNSKEKISTKSDLSQLTVKSIINNKPIYNQFKNFFNSSKLSQFMDQINPLGEMASKRKVTSLGPGGLNRDTAQFEVRDVHTTHYGRICPVETPEGQNIGLILNFSVFSRINQYGFIITPYYQVKNRIVDYSKVHWLAASEEFDKSFAQSGVEIDQNNRIIPDKLTVRKNQTYLVLDAEQVNYIDVSSMQMTSISASAIPFLENNDANRALMGSNMQRQAVPLIKSEAPLVATGIEEAVARFSATNLRASISGKVTYVDAKKIIIDDGEKPEIHYLRYFEKSNQETLILQKPTVKVGDKVKKGQLICDGPSTDNGELALGKNVLVAFSTWYGYNYEDAIIISEKLVKDDVFTSIHIQEQTIKFRSTKAGNDILTAEIPNASAKSRLHLDANGIVIVGSEVDTGDILVGRTSPKGEDNPTAEEKLMAAIWGKKALAQKDTSLRVKNGEGGTVIDVQILSRDQGDNLEEGVGMLIKILIAQKRKIKVGDKMAGRHGNKGVVSVILPVEDMPFLEDGTPVDIVLNPQGVPSRMNIGQVLELHLGMVAKKLKTKFVTPVFDGIKIETIKKLFDEANIPESGKFKLFDGISGQAFENPVSVGYMYMLKLLHMVDDKMHARSIGPYSLTTQQPLGGKSQNGGQRFGEMETWALESFGATSVLSELLTYKSDNIQGRNLLYNNIISGGKIPSPGTPESFNVLAYELRGLLIKLEVHKNDQENQEVEEIKDPLELPEIPSNFIDEYNQDGRIELNKLEEFADFDEENIDFDKLTR</sequence>
<reference key="1">
    <citation type="journal article" date="2005" name="J. Bacteriol.">
        <title>Swine and poultry pathogens: the complete genome sequences of two strains of Mycoplasma hyopneumoniae and a strain of Mycoplasma synoviae.</title>
        <authorList>
            <person name="Vasconcelos A.T.R."/>
            <person name="Ferreira H.B."/>
            <person name="Bizarro C.V."/>
            <person name="Bonatto S.L."/>
            <person name="Carvalho M.O."/>
            <person name="Pinto P.M."/>
            <person name="Almeida D.F."/>
            <person name="Almeida L.G.P."/>
            <person name="Almeida R."/>
            <person name="Alves-Junior L."/>
            <person name="Assuncao E.N."/>
            <person name="Azevedo V.A.C."/>
            <person name="Bogo M.R."/>
            <person name="Brigido M.M."/>
            <person name="Brocchi M."/>
            <person name="Burity H.A."/>
            <person name="Camargo A.A."/>
            <person name="Camargo S.S."/>
            <person name="Carepo M.S."/>
            <person name="Carraro D.M."/>
            <person name="de Mattos Cascardo J.C."/>
            <person name="Castro L.A."/>
            <person name="Cavalcanti G."/>
            <person name="Chemale G."/>
            <person name="Collevatti R.G."/>
            <person name="Cunha C.W."/>
            <person name="Dallagiovanna B."/>
            <person name="Dambros B.P."/>
            <person name="Dellagostin O.A."/>
            <person name="Falcao C."/>
            <person name="Fantinatti-Garboggini F."/>
            <person name="Felipe M.S.S."/>
            <person name="Fiorentin L."/>
            <person name="Franco G.R."/>
            <person name="Freitas N.S.A."/>
            <person name="Frias D."/>
            <person name="Grangeiro T.B."/>
            <person name="Grisard E.C."/>
            <person name="Guimaraes C.T."/>
            <person name="Hungria M."/>
            <person name="Jardim S.N."/>
            <person name="Krieger M.A."/>
            <person name="Laurino J.P."/>
            <person name="Lima L.F.A."/>
            <person name="Lopes M.I."/>
            <person name="Loreto E.L.S."/>
            <person name="Madeira H.M.F."/>
            <person name="Manfio G.P."/>
            <person name="Maranhao A.Q."/>
            <person name="Martinkovics C.T."/>
            <person name="Medeiros S.R.B."/>
            <person name="Moreira M.A.M."/>
            <person name="Neiva M."/>
            <person name="Ramalho-Neto C.E."/>
            <person name="Nicolas M.F."/>
            <person name="Oliveira S.C."/>
            <person name="Paixao R.F.C."/>
            <person name="Pedrosa F.O."/>
            <person name="Pena S.D.J."/>
            <person name="Pereira M."/>
            <person name="Pereira-Ferrari L."/>
            <person name="Piffer I."/>
            <person name="Pinto L.S."/>
            <person name="Potrich D.P."/>
            <person name="Salim A.C.M."/>
            <person name="Santos F.R."/>
            <person name="Schmitt R."/>
            <person name="Schneider M.P.C."/>
            <person name="Schrank A."/>
            <person name="Schrank I.S."/>
            <person name="Schuck A.F."/>
            <person name="Seuanez H.N."/>
            <person name="Silva D.W."/>
            <person name="Silva R."/>
            <person name="Silva S.C."/>
            <person name="Soares C.M.A."/>
            <person name="Souza K.R.L."/>
            <person name="Souza R.C."/>
            <person name="Staats C.C."/>
            <person name="Steffens M.B.R."/>
            <person name="Teixeira S.M.R."/>
            <person name="Urmenyi T.P."/>
            <person name="Vainstein M.H."/>
            <person name="Zuccherato L.W."/>
            <person name="Simpson A.J.G."/>
            <person name="Zaha A."/>
        </authorList>
    </citation>
    <scope>NUCLEOTIDE SEQUENCE [LARGE SCALE GENOMIC DNA]</scope>
    <source>
        <strain>7448</strain>
    </source>
</reference>
<gene>
    <name evidence="1" type="primary">rpoB</name>
    <name type="ordered locus">MHP7448_0617</name>
</gene>
<accession>Q4A7A9</accession>
<feature type="chain" id="PRO_0000224076" description="DNA-directed RNA polymerase subunit beta">
    <location>
        <begin position="1"/>
        <end position="1220"/>
    </location>
</feature>
<proteinExistence type="inferred from homology"/>
<evidence type="ECO:0000255" key="1">
    <source>
        <dbReference type="HAMAP-Rule" id="MF_01321"/>
    </source>
</evidence>